<protein>
    <recommendedName>
        <fullName evidence="2">Short cationic peptide-1d</fullName>
        <shortName evidence="2">SCP-1d</shortName>
    </recommendedName>
    <alternativeName>
        <fullName evidence="2">Cupiennin 1-like peptide-1d</fullName>
    </alternativeName>
    <alternativeName>
        <fullName evidence="3">Truncated variant of Cupiennin 1 family</fullName>
    </alternativeName>
</protein>
<name>TXS1D_CUPSA</name>
<reference key="1">
    <citation type="journal article" date="2012" name="FEBS J.">
        <title>Multicomponent venom of the spider Cupiennius salei: a bioanalytical investigation applying different strategies.</title>
        <authorList>
            <person name="Trachsel C."/>
            <person name="Siegemund D."/>
            <person name="Kampfer U."/>
            <person name="Kopp L.S."/>
            <person name="Buhr C."/>
            <person name="Grossmann J."/>
            <person name="Luthi C."/>
            <person name="Cunningham M."/>
            <person name="Nentwig W."/>
            <person name="Kuhn-Nentwig L."/>
            <person name="Schurch S."/>
            <person name="Schaller J."/>
        </authorList>
    </citation>
    <scope>PROTEIN SEQUENCE</scope>
    <scope>MASS SPECTROMETRY</scope>
    <source>
        <tissue>Venom</tissue>
    </source>
</reference>
<feature type="peptide" id="PRO_0000421203" description="Short cationic peptide-1d" evidence="1">
    <location>
        <begin position="1"/>
        <end position="15"/>
    </location>
</feature>
<dbReference type="GO" id="GO:0005576">
    <property type="term" value="C:extracellular region"/>
    <property type="evidence" value="ECO:0007669"/>
    <property type="project" value="UniProtKB-SubCell"/>
</dbReference>
<dbReference type="GO" id="GO:0090729">
    <property type="term" value="F:toxin activity"/>
    <property type="evidence" value="ECO:0007669"/>
    <property type="project" value="UniProtKB-KW"/>
</dbReference>
<dbReference type="GO" id="GO:0042742">
    <property type="term" value="P:defense response to bacterium"/>
    <property type="evidence" value="ECO:0007669"/>
    <property type="project" value="InterPro"/>
</dbReference>
<dbReference type="InterPro" id="IPR035164">
    <property type="entry name" value="Cupiennin"/>
</dbReference>
<dbReference type="Pfam" id="PF17563">
    <property type="entry name" value="Cu"/>
    <property type="match status" value="1"/>
</dbReference>
<organism>
    <name type="scientific">Cupiennius salei</name>
    <name type="common">American wandering spider</name>
    <dbReference type="NCBI Taxonomy" id="6928"/>
    <lineage>
        <taxon>Eukaryota</taxon>
        <taxon>Metazoa</taxon>
        <taxon>Ecdysozoa</taxon>
        <taxon>Arthropoda</taxon>
        <taxon>Chelicerata</taxon>
        <taxon>Arachnida</taxon>
        <taxon>Araneae</taxon>
        <taxon>Araneomorphae</taxon>
        <taxon>Entelegynae</taxon>
        <taxon>Lycosoidea</taxon>
        <taxon>Ctenidae</taxon>
        <taxon>Cupiennius</taxon>
    </lineage>
</organism>
<sequence>GFGSLFKFLGKKVLK</sequence>
<comment type="subcellular location">
    <subcellularLocation>
        <location evidence="1">Secreted</location>
    </subcellularLocation>
</comment>
<comment type="tissue specificity">
    <text evidence="4">Expressed by the venom gland.</text>
</comment>
<comment type="mass spectrometry"/>
<comment type="similarity">
    <text evidence="3">Belongs to the cationic peptide 04 (cupiennin) family. 03 subfamily.</text>
</comment>
<accession>B3EWU4</accession>
<proteinExistence type="evidence at protein level"/>
<keyword id="KW-0903">Direct protein sequencing</keyword>
<keyword id="KW-0964">Secreted</keyword>
<keyword id="KW-0800">Toxin</keyword>
<evidence type="ECO:0000269" key="1">
    <source>
    </source>
</evidence>
<evidence type="ECO:0000303" key="2">
    <source>
    </source>
</evidence>
<evidence type="ECO:0000305" key="3"/>
<evidence type="ECO:0000305" key="4">
    <source>
    </source>
</evidence>